<gene>
    <name evidence="1" type="primary">rplR</name>
    <name type="ordered locus">SA2032</name>
</gene>
<accession>Q7A467</accession>
<proteinExistence type="evidence at protein level"/>
<dbReference type="EMBL" id="BA000018">
    <property type="protein sequence ID" value="BAB43326.1"/>
    <property type="molecule type" value="Genomic_DNA"/>
</dbReference>
<dbReference type="PIR" id="E90020">
    <property type="entry name" value="E90020"/>
</dbReference>
<dbReference type="RefSeq" id="WP_000623881.1">
    <property type="nucleotide sequence ID" value="NC_002745.2"/>
</dbReference>
<dbReference type="SMR" id="Q7A467"/>
<dbReference type="EnsemblBacteria" id="BAB43326">
    <property type="protein sequence ID" value="BAB43326"/>
    <property type="gene ID" value="BAB43326"/>
</dbReference>
<dbReference type="KEGG" id="sau:SA2032"/>
<dbReference type="HOGENOM" id="CLU_098841_0_1_9"/>
<dbReference type="GO" id="GO:0022625">
    <property type="term" value="C:cytosolic large ribosomal subunit"/>
    <property type="evidence" value="ECO:0007669"/>
    <property type="project" value="TreeGrafter"/>
</dbReference>
<dbReference type="GO" id="GO:0008097">
    <property type="term" value="F:5S rRNA binding"/>
    <property type="evidence" value="ECO:0007669"/>
    <property type="project" value="TreeGrafter"/>
</dbReference>
<dbReference type="GO" id="GO:0003735">
    <property type="term" value="F:structural constituent of ribosome"/>
    <property type="evidence" value="ECO:0007669"/>
    <property type="project" value="InterPro"/>
</dbReference>
<dbReference type="GO" id="GO:0006412">
    <property type="term" value="P:translation"/>
    <property type="evidence" value="ECO:0007669"/>
    <property type="project" value="UniProtKB-UniRule"/>
</dbReference>
<dbReference type="CDD" id="cd00432">
    <property type="entry name" value="Ribosomal_L18_L5e"/>
    <property type="match status" value="1"/>
</dbReference>
<dbReference type="FunFam" id="3.30.420.100:FF:000001">
    <property type="entry name" value="50S ribosomal protein L18"/>
    <property type="match status" value="1"/>
</dbReference>
<dbReference type="Gene3D" id="3.30.420.100">
    <property type="match status" value="1"/>
</dbReference>
<dbReference type="HAMAP" id="MF_01337_B">
    <property type="entry name" value="Ribosomal_uL18_B"/>
    <property type="match status" value="1"/>
</dbReference>
<dbReference type="InterPro" id="IPR004389">
    <property type="entry name" value="Ribosomal_uL18_bac-type"/>
</dbReference>
<dbReference type="InterPro" id="IPR005484">
    <property type="entry name" value="Ribosomal_uL18_bac/euk"/>
</dbReference>
<dbReference type="NCBIfam" id="TIGR00060">
    <property type="entry name" value="L18_bact"/>
    <property type="match status" value="1"/>
</dbReference>
<dbReference type="PANTHER" id="PTHR12899">
    <property type="entry name" value="39S RIBOSOMAL PROTEIN L18, MITOCHONDRIAL"/>
    <property type="match status" value="1"/>
</dbReference>
<dbReference type="PANTHER" id="PTHR12899:SF3">
    <property type="entry name" value="LARGE RIBOSOMAL SUBUNIT PROTEIN UL18M"/>
    <property type="match status" value="1"/>
</dbReference>
<dbReference type="Pfam" id="PF00861">
    <property type="entry name" value="Ribosomal_L18p"/>
    <property type="match status" value="1"/>
</dbReference>
<dbReference type="SUPFAM" id="SSF53137">
    <property type="entry name" value="Translational machinery components"/>
    <property type="match status" value="1"/>
</dbReference>
<keyword id="KW-0687">Ribonucleoprotein</keyword>
<keyword id="KW-0689">Ribosomal protein</keyword>
<keyword id="KW-0694">RNA-binding</keyword>
<keyword id="KW-0699">rRNA-binding</keyword>
<protein>
    <recommendedName>
        <fullName evidence="1">Large ribosomal subunit protein uL18</fullName>
    </recommendedName>
    <alternativeName>
        <fullName evidence="2">50S ribosomal protein L18</fullName>
    </alternativeName>
</protein>
<name>RL18_STAAN</name>
<feature type="chain" id="PRO_0000131344" description="Large ribosomal subunit protein uL18">
    <location>
        <begin position="1"/>
        <end position="119"/>
    </location>
</feature>
<organism>
    <name type="scientific">Staphylococcus aureus (strain N315)</name>
    <dbReference type="NCBI Taxonomy" id="158879"/>
    <lineage>
        <taxon>Bacteria</taxon>
        <taxon>Bacillati</taxon>
        <taxon>Bacillota</taxon>
        <taxon>Bacilli</taxon>
        <taxon>Bacillales</taxon>
        <taxon>Staphylococcaceae</taxon>
        <taxon>Staphylococcus</taxon>
    </lineage>
</organism>
<evidence type="ECO:0000255" key="1">
    <source>
        <dbReference type="HAMAP-Rule" id="MF_01337"/>
    </source>
</evidence>
<evidence type="ECO:0000305" key="2"/>
<reference key="1">
    <citation type="journal article" date="2001" name="Lancet">
        <title>Whole genome sequencing of meticillin-resistant Staphylococcus aureus.</title>
        <authorList>
            <person name="Kuroda M."/>
            <person name="Ohta T."/>
            <person name="Uchiyama I."/>
            <person name="Baba T."/>
            <person name="Yuzawa H."/>
            <person name="Kobayashi I."/>
            <person name="Cui L."/>
            <person name="Oguchi A."/>
            <person name="Aoki K."/>
            <person name="Nagai Y."/>
            <person name="Lian J.-Q."/>
            <person name="Ito T."/>
            <person name="Kanamori M."/>
            <person name="Matsumaru H."/>
            <person name="Maruyama A."/>
            <person name="Murakami H."/>
            <person name="Hosoyama A."/>
            <person name="Mizutani-Ui Y."/>
            <person name="Takahashi N.K."/>
            <person name="Sawano T."/>
            <person name="Inoue R."/>
            <person name="Kaito C."/>
            <person name="Sekimizu K."/>
            <person name="Hirakawa H."/>
            <person name="Kuhara S."/>
            <person name="Goto S."/>
            <person name="Yabuzaki J."/>
            <person name="Kanehisa M."/>
            <person name="Yamashita A."/>
            <person name="Oshima K."/>
            <person name="Furuya K."/>
            <person name="Yoshino C."/>
            <person name="Shiba T."/>
            <person name="Hattori M."/>
            <person name="Ogasawara N."/>
            <person name="Hayashi H."/>
            <person name="Hiramatsu K."/>
        </authorList>
    </citation>
    <scope>NUCLEOTIDE SEQUENCE [LARGE SCALE GENOMIC DNA]</scope>
    <source>
        <strain>N315</strain>
    </source>
</reference>
<reference key="2">
    <citation type="submission" date="2007-10" db="UniProtKB">
        <title>Shotgun proteomic analysis of total and membrane protein extracts of S. aureus strain N315.</title>
        <authorList>
            <person name="Vaezzadeh A.R."/>
            <person name="Deshusses J."/>
            <person name="Lescuyer P."/>
            <person name="Hochstrasser D.F."/>
        </authorList>
    </citation>
    <scope>IDENTIFICATION BY MASS SPECTROMETRY [LARGE SCALE ANALYSIS]</scope>
    <source>
        <strain>N315</strain>
    </source>
</reference>
<sequence>MISKIDKNKVRLKRHARVRTNLSGTAEKPRLNVYRSNKHIYAQIIDDNKGVTLAQASSKDSDIATTATKVELATKVGEAIAKKAADKGIKEIVFDRGGYLYHGRVKALAEAARESGLEF</sequence>
<comment type="function">
    <text evidence="1">This is one of the proteins that bind and probably mediate the attachment of the 5S RNA into the large ribosomal subunit, where it forms part of the central protuberance.</text>
</comment>
<comment type="subunit">
    <text evidence="1">Part of the 50S ribosomal subunit; part of the 5S rRNA/L5/L18/L25 subcomplex. Contacts the 5S and 23S rRNAs.</text>
</comment>
<comment type="similarity">
    <text evidence="1">Belongs to the universal ribosomal protein uL18 family.</text>
</comment>